<gene>
    <name type="ORF">ORF4</name>
</gene>
<organismHost>
    <name type="scientific">Cicer arietinum</name>
    <name type="common">Chickpea</name>
    <name type="synonym">Garbanzo</name>
    <dbReference type="NCBI Taxonomy" id="3827"/>
</organismHost>
<organismHost>
    <name type="scientific">Lens culinaris</name>
    <name type="common">Lentil</name>
    <name type="synonym">Cicer lens</name>
    <dbReference type="NCBI Taxonomy" id="3864"/>
</organismHost>
<organismHost>
    <name type="scientific">Medicago sativa</name>
    <name type="common">Alfalfa</name>
    <dbReference type="NCBI Taxonomy" id="3879"/>
</organismHost>
<organismHost>
    <name type="scientific">Phaseolus vulgaris</name>
    <name type="common">Kidney bean</name>
    <name type="synonym">French bean</name>
    <dbReference type="NCBI Taxonomy" id="3885"/>
</organismHost>
<organismHost>
    <name type="scientific">Pisum sativum</name>
    <name type="common">Garden pea</name>
    <name type="synonym">Lathyrus oleraceus</name>
    <dbReference type="NCBI Taxonomy" id="3888"/>
</organismHost>
<organismHost>
    <name type="scientific">Trifolium repens</name>
    <name type="common">Creeping white clover</name>
    <dbReference type="NCBI Taxonomy" id="3899"/>
</organismHost>
<organismHost>
    <name type="scientific">Vicia faba</name>
    <name type="common">Broad bean</name>
    <name type="synonym">Faba vulgaris</name>
    <dbReference type="NCBI Taxonomy" id="3906"/>
</organismHost>
<organismHost>
    <name type="scientific">Vigna unguiculata</name>
    <name type="common">Cowpea</name>
    <dbReference type="NCBI Taxonomy" id="3917"/>
</organismHost>
<organism>
    <name type="scientific">Bean leafroll virus</name>
    <name type="common">BLRV</name>
    <dbReference type="NCBI Taxonomy" id="12041"/>
    <lineage>
        <taxon>Viruses</taxon>
        <taxon>Riboviria</taxon>
        <taxon>Orthornavirae</taxon>
        <taxon>Kitrinoviricota</taxon>
        <taxon>Tolucaviricetes</taxon>
        <taxon>Tolivirales</taxon>
        <taxon>Tombusviridae</taxon>
        <taxon>Regressovirinae</taxon>
        <taxon>Luteovirus</taxon>
        <taxon>Luteovirus phaseoli</taxon>
    </lineage>
</organism>
<feature type="chain" id="PRO_0000222415" description="Movement protein">
    <location>
        <begin position="1"/>
        <end position="142"/>
    </location>
</feature>
<feature type="region of interest" description="Disordered" evidence="2">
    <location>
        <begin position="1"/>
        <end position="142"/>
    </location>
</feature>
<feature type="compositionally biased region" description="Polar residues" evidence="2">
    <location>
        <begin position="9"/>
        <end position="22"/>
    </location>
</feature>
<feature type="compositionally biased region" description="Polar residues" evidence="2">
    <location>
        <begin position="33"/>
        <end position="43"/>
    </location>
</feature>
<feature type="compositionally biased region" description="Low complexity" evidence="2">
    <location>
        <begin position="50"/>
        <end position="62"/>
    </location>
</feature>
<feature type="compositionally biased region" description="Polar residues" evidence="2">
    <location>
        <begin position="74"/>
        <end position="95"/>
    </location>
</feature>
<feature type="compositionally biased region" description="Polar residues" evidence="2">
    <location>
        <begin position="113"/>
        <end position="124"/>
    </location>
</feature>
<feature type="compositionally biased region" description="Basic and acidic residues" evidence="2">
    <location>
        <begin position="125"/>
        <end position="142"/>
    </location>
</feature>
<accession>P19127</accession>
<comment type="function">
    <text evidence="1">Transports viral genome to neighboring plant cells directly through plasmosdesmata, without any budding. The movement protein allows efficient cell to cell propagation, by bypassing the host cell wall barrier (By similarity).</text>
</comment>
<comment type="similarity">
    <text evidence="3">Belongs to the luteoviruses movement protein family.</text>
</comment>
<sequence>MDLPEDQARFTNSYSLRTTSMETPREVSRSGRLYQSASRSQMAYSRPTMSIISRTSSWRTSPRPLPPPQVPSLMNSILTSRTQQSSPKLTNSASPNLRRKSSLGRLSMDRHGTTLQRTNSGFSTKETEMPRLLDRSESLSRY</sequence>
<evidence type="ECO:0000250" key="1"/>
<evidence type="ECO:0000256" key="2">
    <source>
        <dbReference type="SAM" id="MobiDB-lite"/>
    </source>
</evidence>
<evidence type="ECO:0000305" key="3"/>
<reference key="1">
    <citation type="journal article" date="1990" name="Nucleic Acids Res.">
        <title>Nucleotide sequence of the bean leafroll luteovirus coat protein gene.</title>
        <authorList>
            <person name="Prill B."/>
            <person name="Maiss E."/>
            <person name="Katul L."/>
            <person name="Casper R."/>
        </authorList>
    </citation>
    <scope>NUCLEOTIDE SEQUENCE [GENOMIC RNA]</scope>
</reference>
<keyword id="KW-0813">Transport</keyword>
<keyword id="KW-0916">Viral movement protein</keyword>
<name>MVP_BLRV</name>
<dbReference type="EMBL" id="X53865">
    <property type="protein sequence ID" value="CAA37859.1"/>
    <property type="molecule type" value="Genomic_RNA"/>
</dbReference>
<dbReference type="PIR" id="S11438">
    <property type="entry name" value="S11438"/>
</dbReference>
<dbReference type="GO" id="GO:0046740">
    <property type="term" value="P:transport of virus in host, cell to cell"/>
    <property type="evidence" value="ECO:0007669"/>
    <property type="project" value="UniProtKB-KW"/>
</dbReference>
<dbReference type="InterPro" id="IPR001964">
    <property type="entry name" value="Luteo_VPG"/>
</dbReference>
<dbReference type="Pfam" id="PF01659">
    <property type="entry name" value="Luteo_Vpg"/>
    <property type="match status" value="1"/>
</dbReference>
<dbReference type="PRINTS" id="PR00912">
    <property type="entry name" value="LVIRUSORF5"/>
</dbReference>
<protein>
    <recommendedName>
        <fullName>Movement protein</fullName>
        <shortName>MP</shortName>
    </recommendedName>
    <alternativeName>
        <fullName>16 kDa protein</fullName>
    </alternativeName>
</protein>
<proteinExistence type="inferred from homology"/>